<evidence type="ECO:0000255" key="1">
    <source>
        <dbReference type="HAMAP-Rule" id="MF_01725"/>
    </source>
</evidence>
<evidence type="ECO:0000305" key="2"/>
<protein>
    <recommendedName>
        <fullName evidence="1">Zinc import ATP-binding protein ZnuC</fullName>
        <ecNumber evidence="1">7.2.2.20</ecNumber>
    </recommendedName>
</protein>
<organism>
    <name type="scientific">Psychrobacter cryohalolentis (strain ATCC BAA-1226 / DSM 17306 / VKM B-2378 / K5)</name>
    <dbReference type="NCBI Taxonomy" id="335284"/>
    <lineage>
        <taxon>Bacteria</taxon>
        <taxon>Pseudomonadati</taxon>
        <taxon>Pseudomonadota</taxon>
        <taxon>Gammaproteobacteria</taxon>
        <taxon>Moraxellales</taxon>
        <taxon>Moraxellaceae</taxon>
        <taxon>Psychrobacter</taxon>
    </lineage>
</organism>
<reference key="1">
    <citation type="submission" date="2006-03" db="EMBL/GenBank/DDBJ databases">
        <title>Complete sequence of chromosome of Psychrobacter cryohalolentis K5.</title>
        <authorList>
            <consortium name="US DOE Joint Genome Institute"/>
            <person name="Copeland A."/>
            <person name="Lucas S."/>
            <person name="Lapidus A."/>
            <person name="Barry K."/>
            <person name="Detter J.C."/>
            <person name="Glavina T."/>
            <person name="Hammon N."/>
            <person name="Israni S."/>
            <person name="Dalin E."/>
            <person name="Tice H."/>
            <person name="Pitluck S."/>
            <person name="Brettin T."/>
            <person name="Bruce D."/>
            <person name="Han C."/>
            <person name="Tapia R."/>
            <person name="Sims D.R."/>
            <person name="Gilna P."/>
            <person name="Schmutz J."/>
            <person name="Larimer F."/>
            <person name="Land M."/>
            <person name="Hauser L."/>
            <person name="Kyrpides N."/>
            <person name="Kim E."/>
            <person name="Richardson P."/>
        </authorList>
    </citation>
    <scope>NUCLEOTIDE SEQUENCE [LARGE SCALE GENOMIC DNA]</scope>
    <source>
        <strain>ATCC BAA-1226 / DSM 17306 / VKM B-2378 / K5</strain>
    </source>
</reference>
<accession>Q1Q889</accession>
<name>ZNUC_PSYCK</name>
<proteinExistence type="inferred from homology"/>
<keyword id="KW-0067">ATP-binding</keyword>
<keyword id="KW-0997">Cell inner membrane</keyword>
<keyword id="KW-1003">Cell membrane</keyword>
<keyword id="KW-0406">Ion transport</keyword>
<keyword id="KW-0472">Membrane</keyword>
<keyword id="KW-0547">Nucleotide-binding</keyword>
<keyword id="KW-1278">Translocase</keyword>
<keyword id="KW-0813">Transport</keyword>
<keyword id="KW-0862">Zinc</keyword>
<keyword id="KW-0864">Zinc transport</keyword>
<sequence length="243" mass="27314">MNNTSKLLNLSNVSYYIGQQRLLSNINIDIAVNETVSVIGPNGAGKSTLVKLILGLIVPTSGQVTPSEPLQIGYVPQRFSVPPILPLRVSDLLAQACKKRLTAEQRQFIFDKLSLTHLLSRQMLHLSGGETQRVLLARALLDKPNLLILDEPMQGLDPETEVWLYQFIDELPEFLRCAMLVVSHDLHWVMKGSRRVICLNKHICCEGQPSELAISSEFQKLFGHHYEQPYVHQPHACEHHAPS</sequence>
<dbReference type="EC" id="7.2.2.20" evidence="1"/>
<dbReference type="EMBL" id="CP000323">
    <property type="protein sequence ID" value="ABE76114.1"/>
    <property type="status" value="ALT_INIT"/>
    <property type="molecule type" value="Genomic_DNA"/>
</dbReference>
<dbReference type="SMR" id="Q1Q889"/>
<dbReference type="STRING" id="335284.Pcryo_2337"/>
<dbReference type="KEGG" id="pcr:Pcryo_2337"/>
<dbReference type="eggNOG" id="COG1121">
    <property type="taxonomic scope" value="Bacteria"/>
</dbReference>
<dbReference type="HOGENOM" id="CLU_000604_1_11_6"/>
<dbReference type="Proteomes" id="UP000002425">
    <property type="component" value="Chromosome"/>
</dbReference>
<dbReference type="GO" id="GO:0005886">
    <property type="term" value="C:plasma membrane"/>
    <property type="evidence" value="ECO:0007669"/>
    <property type="project" value="UniProtKB-SubCell"/>
</dbReference>
<dbReference type="GO" id="GO:0015633">
    <property type="term" value="F:ABC-type zinc transporter activity"/>
    <property type="evidence" value="ECO:0007669"/>
    <property type="project" value="UniProtKB-EC"/>
</dbReference>
<dbReference type="GO" id="GO:0005524">
    <property type="term" value="F:ATP binding"/>
    <property type="evidence" value="ECO:0007669"/>
    <property type="project" value="UniProtKB-KW"/>
</dbReference>
<dbReference type="GO" id="GO:0016887">
    <property type="term" value="F:ATP hydrolysis activity"/>
    <property type="evidence" value="ECO:0007669"/>
    <property type="project" value="InterPro"/>
</dbReference>
<dbReference type="GO" id="GO:0010043">
    <property type="term" value="P:response to zinc ion"/>
    <property type="evidence" value="ECO:0007669"/>
    <property type="project" value="TreeGrafter"/>
</dbReference>
<dbReference type="Gene3D" id="3.40.50.300">
    <property type="entry name" value="P-loop containing nucleotide triphosphate hydrolases"/>
    <property type="match status" value="1"/>
</dbReference>
<dbReference type="InterPro" id="IPR003593">
    <property type="entry name" value="AAA+_ATPase"/>
</dbReference>
<dbReference type="InterPro" id="IPR003439">
    <property type="entry name" value="ABC_transporter-like_ATP-bd"/>
</dbReference>
<dbReference type="InterPro" id="IPR050153">
    <property type="entry name" value="Metal_Ion_Import_ABC"/>
</dbReference>
<dbReference type="InterPro" id="IPR027417">
    <property type="entry name" value="P-loop_NTPase"/>
</dbReference>
<dbReference type="PANTHER" id="PTHR42734">
    <property type="entry name" value="METAL TRANSPORT SYSTEM ATP-BINDING PROTEIN TM_0124-RELATED"/>
    <property type="match status" value="1"/>
</dbReference>
<dbReference type="PANTHER" id="PTHR42734:SF9">
    <property type="entry name" value="ZINC IMPORT ATP-BINDING PROTEIN ZNUC"/>
    <property type="match status" value="1"/>
</dbReference>
<dbReference type="Pfam" id="PF00005">
    <property type="entry name" value="ABC_tran"/>
    <property type="match status" value="1"/>
</dbReference>
<dbReference type="SMART" id="SM00382">
    <property type="entry name" value="AAA"/>
    <property type="match status" value="1"/>
</dbReference>
<dbReference type="SUPFAM" id="SSF52540">
    <property type="entry name" value="P-loop containing nucleoside triphosphate hydrolases"/>
    <property type="match status" value="1"/>
</dbReference>
<dbReference type="PROSITE" id="PS50893">
    <property type="entry name" value="ABC_TRANSPORTER_2"/>
    <property type="match status" value="1"/>
</dbReference>
<dbReference type="PROSITE" id="PS51298">
    <property type="entry name" value="ZNUC"/>
    <property type="match status" value="1"/>
</dbReference>
<gene>
    <name evidence="1" type="primary">znuC</name>
    <name type="ordered locus">Pcryo_2337</name>
</gene>
<feature type="chain" id="PRO_0000281534" description="Zinc import ATP-binding protein ZnuC">
    <location>
        <begin position="1"/>
        <end position="243"/>
    </location>
</feature>
<feature type="domain" description="ABC transporter" evidence="1">
    <location>
        <begin position="8"/>
        <end position="225"/>
    </location>
</feature>
<feature type="binding site" evidence="1">
    <location>
        <begin position="40"/>
        <end position="47"/>
    </location>
    <ligand>
        <name>ATP</name>
        <dbReference type="ChEBI" id="CHEBI:30616"/>
    </ligand>
</feature>
<comment type="function">
    <text evidence="1">Part of the ABC transporter complex ZnuABC involved in zinc import. Responsible for energy coupling to the transport system.</text>
</comment>
<comment type="catalytic activity">
    <reaction evidence="1">
        <text>Zn(2+)(out) + ATP(in) + H2O(in) = Zn(2+)(in) + ADP(in) + phosphate(in) + H(+)(in)</text>
        <dbReference type="Rhea" id="RHEA:29795"/>
        <dbReference type="ChEBI" id="CHEBI:15377"/>
        <dbReference type="ChEBI" id="CHEBI:15378"/>
        <dbReference type="ChEBI" id="CHEBI:29105"/>
        <dbReference type="ChEBI" id="CHEBI:30616"/>
        <dbReference type="ChEBI" id="CHEBI:43474"/>
        <dbReference type="ChEBI" id="CHEBI:456216"/>
        <dbReference type="EC" id="7.2.2.20"/>
    </reaction>
</comment>
<comment type="subunit">
    <text evidence="1">The complex is composed of two ATP-binding proteins (ZnuC), two transmembrane proteins (ZnuB) and a solute-binding protein (ZnuA).</text>
</comment>
<comment type="subcellular location">
    <subcellularLocation>
        <location evidence="1">Cell inner membrane</location>
        <topology evidence="1">Peripheral membrane protein</topology>
    </subcellularLocation>
</comment>
<comment type="similarity">
    <text evidence="1">Belongs to the ABC transporter superfamily. Zinc importer (TC 3.A.1.15.5) family.</text>
</comment>
<comment type="sequence caution" evidence="2">
    <conflict type="erroneous initiation">
        <sequence resource="EMBL-CDS" id="ABE76114"/>
    </conflict>
</comment>